<accession>A6U7A9</accession>
<keyword id="KW-0997">Cell inner membrane</keyword>
<keyword id="KW-1003">Cell membrane</keyword>
<keyword id="KW-0963">Cytoplasm</keyword>
<keyword id="KW-0342">GTP-binding</keyword>
<keyword id="KW-0472">Membrane</keyword>
<keyword id="KW-0547">Nucleotide-binding</keyword>
<keyword id="KW-0690">Ribosome biogenesis</keyword>
<keyword id="KW-0694">RNA-binding</keyword>
<keyword id="KW-0699">rRNA-binding</keyword>
<gene>
    <name evidence="1" type="primary">era</name>
    <name type="ordered locus">Smed_0683</name>
</gene>
<name>ERA_SINMW</name>
<reference key="1">
    <citation type="submission" date="2007-06" db="EMBL/GenBank/DDBJ databases">
        <title>Complete sequence of Sinorhizobium medicae WSM419 chromosome.</title>
        <authorList>
            <consortium name="US DOE Joint Genome Institute"/>
            <person name="Copeland A."/>
            <person name="Lucas S."/>
            <person name="Lapidus A."/>
            <person name="Barry K."/>
            <person name="Glavina del Rio T."/>
            <person name="Dalin E."/>
            <person name="Tice H."/>
            <person name="Pitluck S."/>
            <person name="Chain P."/>
            <person name="Malfatti S."/>
            <person name="Shin M."/>
            <person name="Vergez L."/>
            <person name="Schmutz J."/>
            <person name="Larimer F."/>
            <person name="Land M."/>
            <person name="Hauser L."/>
            <person name="Kyrpides N."/>
            <person name="Mikhailova N."/>
            <person name="Reeve W.G."/>
            <person name="Richardson P."/>
        </authorList>
    </citation>
    <scope>NUCLEOTIDE SEQUENCE [LARGE SCALE GENOMIC DNA]</scope>
    <source>
        <strain>WSM419</strain>
    </source>
</reference>
<feature type="chain" id="PRO_1000079739" description="GTPase Era">
    <location>
        <begin position="1"/>
        <end position="310"/>
    </location>
</feature>
<feature type="domain" description="Era-type G" evidence="2">
    <location>
        <begin position="17"/>
        <end position="184"/>
    </location>
</feature>
<feature type="domain" description="KH type-2" evidence="1">
    <location>
        <begin position="215"/>
        <end position="292"/>
    </location>
</feature>
<feature type="region of interest" description="G1" evidence="2">
    <location>
        <begin position="25"/>
        <end position="32"/>
    </location>
</feature>
<feature type="region of interest" description="G2" evidence="2">
    <location>
        <begin position="51"/>
        <end position="55"/>
    </location>
</feature>
<feature type="region of interest" description="G3" evidence="2">
    <location>
        <begin position="72"/>
        <end position="75"/>
    </location>
</feature>
<feature type="region of interest" description="G4" evidence="2">
    <location>
        <begin position="134"/>
        <end position="137"/>
    </location>
</feature>
<feature type="region of interest" description="G5" evidence="2">
    <location>
        <begin position="163"/>
        <end position="165"/>
    </location>
</feature>
<feature type="binding site" evidence="1">
    <location>
        <begin position="25"/>
        <end position="32"/>
    </location>
    <ligand>
        <name>GTP</name>
        <dbReference type="ChEBI" id="CHEBI:37565"/>
    </ligand>
</feature>
<feature type="binding site" evidence="1">
    <location>
        <begin position="72"/>
        <end position="76"/>
    </location>
    <ligand>
        <name>GTP</name>
        <dbReference type="ChEBI" id="CHEBI:37565"/>
    </ligand>
</feature>
<feature type="binding site" evidence="1">
    <location>
        <begin position="134"/>
        <end position="137"/>
    </location>
    <ligand>
        <name>GTP</name>
        <dbReference type="ChEBI" id="CHEBI:37565"/>
    </ligand>
</feature>
<dbReference type="EMBL" id="CP000738">
    <property type="protein sequence ID" value="ABR59539.1"/>
    <property type="molecule type" value="Genomic_DNA"/>
</dbReference>
<dbReference type="RefSeq" id="WP_011974885.1">
    <property type="nucleotide sequence ID" value="NC_009636.1"/>
</dbReference>
<dbReference type="RefSeq" id="YP_001326374.1">
    <property type="nucleotide sequence ID" value="NC_009636.1"/>
</dbReference>
<dbReference type="SMR" id="A6U7A9"/>
<dbReference type="STRING" id="366394.Smed_0683"/>
<dbReference type="GeneID" id="61609959"/>
<dbReference type="KEGG" id="smd:Smed_0683"/>
<dbReference type="PATRIC" id="fig|366394.8.peg.3785"/>
<dbReference type="eggNOG" id="COG1159">
    <property type="taxonomic scope" value="Bacteria"/>
</dbReference>
<dbReference type="HOGENOM" id="CLU_038009_1_1_5"/>
<dbReference type="OrthoDB" id="9805918at2"/>
<dbReference type="Proteomes" id="UP000001108">
    <property type="component" value="Chromosome"/>
</dbReference>
<dbReference type="GO" id="GO:0005829">
    <property type="term" value="C:cytosol"/>
    <property type="evidence" value="ECO:0007669"/>
    <property type="project" value="TreeGrafter"/>
</dbReference>
<dbReference type="GO" id="GO:0005886">
    <property type="term" value="C:plasma membrane"/>
    <property type="evidence" value="ECO:0007669"/>
    <property type="project" value="UniProtKB-SubCell"/>
</dbReference>
<dbReference type="GO" id="GO:0005525">
    <property type="term" value="F:GTP binding"/>
    <property type="evidence" value="ECO:0007669"/>
    <property type="project" value="UniProtKB-UniRule"/>
</dbReference>
<dbReference type="GO" id="GO:0003924">
    <property type="term" value="F:GTPase activity"/>
    <property type="evidence" value="ECO:0007669"/>
    <property type="project" value="UniProtKB-UniRule"/>
</dbReference>
<dbReference type="GO" id="GO:0043024">
    <property type="term" value="F:ribosomal small subunit binding"/>
    <property type="evidence" value="ECO:0007669"/>
    <property type="project" value="TreeGrafter"/>
</dbReference>
<dbReference type="GO" id="GO:0070181">
    <property type="term" value="F:small ribosomal subunit rRNA binding"/>
    <property type="evidence" value="ECO:0007669"/>
    <property type="project" value="UniProtKB-UniRule"/>
</dbReference>
<dbReference type="GO" id="GO:0000028">
    <property type="term" value="P:ribosomal small subunit assembly"/>
    <property type="evidence" value="ECO:0007669"/>
    <property type="project" value="TreeGrafter"/>
</dbReference>
<dbReference type="CDD" id="cd04163">
    <property type="entry name" value="Era"/>
    <property type="match status" value="1"/>
</dbReference>
<dbReference type="CDD" id="cd22534">
    <property type="entry name" value="KH-II_Era"/>
    <property type="match status" value="1"/>
</dbReference>
<dbReference type="FunFam" id="3.40.50.300:FF:001190">
    <property type="entry name" value="GTP-binding protein ERG"/>
    <property type="match status" value="1"/>
</dbReference>
<dbReference type="FunFam" id="3.30.300.20:FF:000031">
    <property type="entry name" value="GTPase Era"/>
    <property type="match status" value="1"/>
</dbReference>
<dbReference type="Gene3D" id="3.30.300.20">
    <property type="match status" value="1"/>
</dbReference>
<dbReference type="Gene3D" id="3.40.50.300">
    <property type="entry name" value="P-loop containing nucleotide triphosphate hydrolases"/>
    <property type="match status" value="1"/>
</dbReference>
<dbReference type="HAMAP" id="MF_00367">
    <property type="entry name" value="GTPase_Era"/>
    <property type="match status" value="1"/>
</dbReference>
<dbReference type="InterPro" id="IPR030388">
    <property type="entry name" value="G_ERA_dom"/>
</dbReference>
<dbReference type="InterPro" id="IPR006073">
    <property type="entry name" value="GTP-bd"/>
</dbReference>
<dbReference type="InterPro" id="IPR005662">
    <property type="entry name" value="GTPase_Era-like"/>
</dbReference>
<dbReference type="InterPro" id="IPR015946">
    <property type="entry name" value="KH_dom-like_a/b"/>
</dbReference>
<dbReference type="InterPro" id="IPR004044">
    <property type="entry name" value="KH_dom_type_2"/>
</dbReference>
<dbReference type="InterPro" id="IPR009019">
    <property type="entry name" value="KH_sf_prok-type"/>
</dbReference>
<dbReference type="InterPro" id="IPR027417">
    <property type="entry name" value="P-loop_NTPase"/>
</dbReference>
<dbReference type="InterPro" id="IPR005225">
    <property type="entry name" value="Small_GTP-bd"/>
</dbReference>
<dbReference type="NCBIfam" id="TIGR00436">
    <property type="entry name" value="era"/>
    <property type="match status" value="1"/>
</dbReference>
<dbReference type="NCBIfam" id="NF000908">
    <property type="entry name" value="PRK00089.1"/>
    <property type="match status" value="1"/>
</dbReference>
<dbReference type="NCBIfam" id="TIGR00231">
    <property type="entry name" value="small_GTP"/>
    <property type="match status" value="1"/>
</dbReference>
<dbReference type="PANTHER" id="PTHR42698">
    <property type="entry name" value="GTPASE ERA"/>
    <property type="match status" value="1"/>
</dbReference>
<dbReference type="PANTHER" id="PTHR42698:SF1">
    <property type="entry name" value="GTPASE ERA, MITOCHONDRIAL"/>
    <property type="match status" value="1"/>
</dbReference>
<dbReference type="Pfam" id="PF07650">
    <property type="entry name" value="KH_2"/>
    <property type="match status" value="1"/>
</dbReference>
<dbReference type="Pfam" id="PF01926">
    <property type="entry name" value="MMR_HSR1"/>
    <property type="match status" value="1"/>
</dbReference>
<dbReference type="SUPFAM" id="SSF52540">
    <property type="entry name" value="P-loop containing nucleoside triphosphate hydrolases"/>
    <property type="match status" value="1"/>
</dbReference>
<dbReference type="SUPFAM" id="SSF54814">
    <property type="entry name" value="Prokaryotic type KH domain (KH-domain type II)"/>
    <property type="match status" value="1"/>
</dbReference>
<dbReference type="PROSITE" id="PS51713">
    <property type="entry name" value="G_ERA"/>
    <property type="match status" value="1"/>
</dbReference>
<dbReference type="PROSITE" id="PS50823">
    <property type="entry name" value="KH_TYPE_2"/>
    <property type="match status" value="1"/>
</dbReference>
<sequence length="310" mass="34676">MTTDNQQDTAAAAVPTRSGFVALIGATNAGKSTLINRLVGAKVSIVSHKVQTTRAIVRGIAIHDNAQIVFMDTPGIFKPRRRLDRAMVTTAWGGAKDADLIMLLIDSERGIKGDADTILEGLKDVHQPKVLVLNKVDQVRREDLLKLAAAANEVVAFERTFMISALTGSGCEDVMDYLAERLPEGPWYYPEDQISDLPMRQLAAEITREKLFLRLHQELPYASHVETEKWEERKDGSVRIEQVIYVERDSQKKIALGKGGEAIKAISTAARKEISEILEQPVHLFLFVKVRENWGDDPERFREMGLDFPK</sequence>
<comment type="function">
    <text evidence="1">An essential GTPase that binds both GDP and GTP, with rapid nucleotide exchange. Plays a role in 16S rRNA processing and 30S ribosomal subunit biogenesis and possibly also in cell cycle regulation and energy metabolism.</text>
</comment>
<comment type="subunit">
    <text evidence="1">Monomer.</text>
</comment>
<comment type="subcellular location">
    <subcellularLocation>
        <location>Cytoplasm</location>
    </subcellularLocation>
    <subcellularLocation>
        <location evidence="1">Cell inner membrane</location>
        <topology evidence="1">Peripheral membrane protein</topology>
    </subcellularLocation>
</comment>
<comment type="similarity">
    <text evidence="1 2">Belongs to the TRAFAC class TrmE-Era-EngA-EngB-Septin-like GTPase superfamily. Era GTPase family.</text>
</comment>
<organism>
    <name type="scientific">Sinorhizobium medicae (strain WSM419)</name>
    <name type="common">Ensifer medicae</name>
    <dbReference type="NCBI Taxonomy" id="366394"/>
    <lineage>
        <taxon>Bacteria</taxon>
        <taxon>Pseudomonadati</taxon>
        <taxon>Pseudomonadota</taxon>
        <taxon>Alphaproteobacteria</taxon>
        <taxon>Hyphomicrobiales</taxon>
        <taxon>Rhizobiaceae</taxon>
        <taxon>Sinorhizobium/Ensifer group</taxon>
        <taxon>Sinorhizobium</taxon>
    </lineage>
</organism>
<protein>
    <recommendedName>
        <fullName evidence="1">GTPase Era</fullName>
    </recommendedName>
</protein>
<proteinExistence type="inferred from homology"/>
<evidence type="ECO:0000255" key="1">
    <source>
        <dbReference type="HAMAP-Rule" id="MF_00367"/>
    </source>
</evidence>
<evidence type="ECO:0000255" key="2">
    <source>
        <dbReference type="PROSITE-ProRule" id="PRU01050"/>
    </source>
</evidence>